<reference key="1">
    <citation type="journal article" date="2009" name="Proc. Natl. Acad. Sci. U.S.A.">
        <title>The genomic basis of trophic strategy in marine bacteria.</title>
        <authorList>
            <person name="Lauro F.M."/>
            <person name="McDougald D."/>
            <person name="Thomas T."/>
            <person name="Williams T.J."/>
            <person name="Egan S."/>
            <person name="Rice S."/>
            <person name="DeMaere M.Z."/>
            <person name="Ting L."/>
            <person name="Ertan H."/>
            <person name="Johnson J."/>
            <person name="Ferriera S."/>
            <person name="Lapidus A."/>
            <person name="Anderson I."/>
            <person name="Kyrpides N."/>
            <person name="Munk A.C."/>
            <person name="Detter C."/>
            <person name="Han C.S."/>
            <person name="Brown M.V."/>
            <person name="Robb F.T."/>
            <person name="Kjelleberg S."/>
            <person name="Cavicchioli R."/>
        </authorList>
    </citation>
    <scope>NUCLEOTIDE SEQUENCE [LARGE SCALE GENOMIC DNA]</scope>
    <source>
        <strain>DSM 13593 / LMG 18877 / RB2256</strain>
    </source>
</reference>
<dbReference type="EMBL" id="CP000356">
    <property type="protein sequence ID" value="ABF53671.1"/>
    <property type="molecule type" value="Genomic_DNA"/>
</dbReference>
<dbReference type="RefSeq" id="WP_011542247.1">
    <property type="nucleotide sequence ID" value="NC_008048.1"/>
</dbReference>
<dbReference type="SMR" id="Q1GRQ1"/>
<dbReference type="STRING" id="317655.Sala_1959"/>
<dbReference type="KEGG" id="sal:Sala_1959"/>
<dbReference type="eggNOG" id="COG0264">
    <property type="taxonomic scope" value="Bacteria"/>
</dbReference>
<dbReference type="HOGENOM" id="CLU_047155_2_0_5"/>
<dbReference type="OrthoDB" id="9808348at2"/>
<dbReference type="Proteomes" id="UP000006578">
    <property type="component" value="Chromosome"/>
</dbReference>
<dbReference type="GO" id="GO:0005737">
    <property type="term" value="C:cytoplasm"/>
    <property type="evidence" value="ECO:0007669"/>
    <property type="project" value="UniProtKB-SubCell"/>
</dbReference>
<dbReference type="GO" id="GO:0003746">
    <property type="term" value="F:translation elongation factor activity"/>
    <property type="evidence" value="ECO:0007669"/>
    <property type="project" value="UniProtKB-UniRule"/>
</dbReference>
<dbReference type="CDD" id="cd14275">
    <property type="entry name" value="UBA_EF-Ts"/>
    <property type="match status" value="1"/>
</dbReference>
<dbReference type="FunFam" id="1.10.286.20:FF:000001">
    <property type="entry name" value="Elongation factor Ts"/>
    <property type="match status" value="1"/>
</dbReference>
<dbReference type="FunFam" id="1.10.8.10:FF:000001">
    <property type="entry name" value="Elongation factor Ts"/>
    <property type="match status" value="1"/>
</dbReference>
<dbReference type="Gene3D" id="1.10.286.20">
    <property type="match status" value="1"/>
</dbReference>
<dbReference type="Gene3D" id="1.10.8.10">
    <property type="entry name" value="DNA helicase RuvA subunit, C-terminal domain"/>
    <property type="match status" value="1"/>
</dbReference>
<dbReference type="Gene3D" id="3.30.479.20">
    <property type="entry name" value="Elongation factor Ts, dimerisation domain"/>
    <property type="match status" value="2"/>
</dbReference>
<dbReference type="HAMAP" id="MF_00050">
    <property type="entry name" value="EF_Ts"/>
    <property type="match status" value="1"/>
</dbReference>
<dbReference type="InterPro" id="IPR036402">
    <property type="entry name" value="EF-Ts_dimer_sf"/>
</dbReference>
<dbReference type="InterPro" id="IPR001816">
    <property type="entry name" value="Transl_elong_EFTs/EF1B"/>
</dbReference>
<dbReference type="InterPro" id="IPR014039">
    <property type="entry name" value="Transl_elong_EFTs/EF1B_dimer"/>
</dbReference>
<dbReference type="InterPro" id="IPR018101">
    <property type="entry name" value="Transl_elong_Ts_CS"/>
</dbReference>
<dbReference type="InterPro" id="IPR009060">
    <property type="entry name" value="UBA-like_sf"/>
</dbReference>
<dbReference type="NCBIfam" id="TIGR00116">
    <property type="entry name" value="tsf"/>
    <property type="match status" value="1"/>
</dbReference>
<dbReference type="PANTHER" id="PTHR11741">
    <property type="entry name" value="ELONGATION FACTOR TS"/>
    <property type="match status" value="1"/>
</dbReference>
<dbReference type="PANTHER" id="PTHR11741:SF0">
    <property type="entry name" value="ELONGATION FACTOR TS, MITOCHONDRIAL"/>
    <property type="match status" value="1"/>
</dbReference>
<dbReference type="Pfam" id="PF00889">
    <property type="entry name" value="EF_TS"/>
    <property type="match status" value="1"/>
</dbReference>
<dbReference type="SUPFAM" id="SSF54713">
    <property type="entry name" value="Elongation factor Ts (EF-Ts), dimerisation domain"/>
    <property type="match status" value="2"/>
</dbReference>
<dbReference type="SUPFAM" id="SSF46934">
    <property type="entry name" value="UBA-like"/>
    <property type="match status" value="1"/>
</dbReference>
<dbReference type="PROSITE" id="PS01126">
    <property type="entry name" value="EF_TS_1"/>
    <property type="match status" value="1"/>
</dbReference>
<protein>
    <recommendedName>
        <fullName evidence="1">Elongation factor Ts</fullName>
        <shortName evidence="1">EF-Ts</shortName>
    </recommendedName>
</protein>
<organism>
    <name type="scientific">Sphingopyxis alaskensis (strain DSM 13593 / LMG 18877 / RB2256)</name>
    <name type="common">Sphingomonas alaskensis</name>
    <dbReference type="NCBI Taxonomy" id="317655"/>
    <lineage>
        <taxon>Bacteria</taxon>
        <taxon>Pseudomonadati</taxon>
        <taxon>Pseudomonadota</taxon>
        <taxon>Alphaproteobacteria</taxon>
        <taxon>Sphingomonadales</taxon>
        <taxon>Sphingomonadaceae</taxon>
        <taxon>Sphingopyxis</taxon>
    </lineage>
</organism>
<name>EFTS_SPHAL</name>
<sequence>MAEITAALVKELRDRTGAGMMDCKKALAENNGDIEASIDWLRTKGLAAAAKKAGRVAAEGLVGFATDGTRGALVEVNSETDFVGKNEQFQAFVRDVTQVALAEGITDIDALAAAPYPTGGTVAEQLTSNIATIGENQSLRRVALLTVNSGAVTGYVHNAAAPGMGKIGVLVALESSAGADVLEPLGKQLAMHVAAANPLALNGDDLDADLVARERAIAEEKAAQSGKPAEIVAKMVDGAIAKFRKENALLSQLFVMDGKTPVAEVVAAAGKDVGAAITLKGFVRFQLGEGIEKEESDFAAEVAAAAGV</sequence>
<feature type="chain" id="PRO_1000006186" description="Elongation factor Ts">
    <location>
        <begin position="1"/>
        <end position="308"/>
    </location>
</feature>
<feature type="region of interest" description="Involved in Mg(2+) ion dislocation from EF-Tu" evidence="1">
    <location>
        <begin position="80"/>
        <end position="83"/>
    </location>
</feature>
<evidence type="ECO:0000255" key="1">
    <source>
        <dbReference type="HAMAP-Rule" id="MF_00050"/>
    </source>
</evidence>
<keyword id="KW-0963">Cytoplasm</keyword>
<keyword id="KW-0251">Elongation factor</keyword>
<keyword id="KW-0648">Protein biosynthesis</keyword>
<keyword id="KW-1185">Reference proteome</keyword>
<gene>
    <name evidence="1" type="primary">tsf</name>
    <name type="ordered locus">Sala_1959</name>
</gene>
<comment type="function">
    <text evidence="1">Associates with the EF-Tu.GDP complex and induces the exchange of GDP to GTP. It remains bound to the aminoacyl-tRNA.EF-Tu.GTP complex up to the GTP hydrolysis stage on the ribosome.</text>
</comment>
<comment type="subcellular location">
    <subcellularLocation>
        <location evidence="1">Cytoplasm</location>
    </subcellularLocation>
</comment>
<comment type="similarity">
    <text evidence="1">Belongs to the EF-Ts family.</text>
</comment>
<proteinExistence type="inferred from homology"/>
<accession>Q1GRQ1</accession>